<evidence type="ECO:0000255" key="1">
    <source>
        <dbReference type="HAMAP-Rule" id="MF_00435"/>
    </source>
</evidence>
<evidence type="ECO:0000255" key="2">
    <source>
        <dbReference type="PROSITE-ProRule" id="PRU01197"/>
    </source>
</evidence>
<evidence type="ECO:0000255" key="3">
    <source>
        <dbReference type="PROSITE-ProRule" id="PRU01198"/>
    </source>
</evidence>
<comment type="function">
    <text evidence="1">Involved in the biosynthesis of branched-chain amino acids (BCAA). Catalyzes an alkyl-migration followed by a ketol-acid reduction of (S)-2-acetolactate (S2AL) to yield (R)-2,3-dihydroxy-isovalerate. In the isomerase reaction, S2AL is rearranged via a Mg-dependent methyl migration to produce 3-hydroxy-3-methyl-2-ketobutyrate (HMKB). In the reductase reaction, this 2-ketoacid undergoes a metal-dependent reduction by NADPH to yield (R)-2,3-dihydroxy-isovalerate.</text>
</comment>
<comment type="catalytic activity">
    <reaction evidence="1">
        <text>(2R)-2,3-dihydroxy-3-methylbutanoate + NADP(+) = (2S)-2-acetolactate + NADPH + H(+)</text>
        <dbReference type="Rhea" id="RHEA:22068"/>
        <dbReference type="ChEBI" id="CHEBI:15378"/>
        <dbReference type="ChEBI" id="CHEBI:49072"/>
        <dbReference type="ChEBI" id="CHEBI:57783"/>
        <dbReference type="ChEBI" id="CHEBI:58349"/>
        <dbReference type="ChEBI" id="CHEBI:58476"/>
        <dbReference type="EC" id="1.1.1.86"/>
    </reaction>
</comment>
<comment type="catalytic activity">
    <reaction evidence="1">
        <text>(2R,3R)-2,3-dihydroxy-3-methylpentanoate + NADP(+) = (S)-2-ethyl-2-hydroxy-3-oxobutanoate + NADPH + H(+)</text>
        <dbReference type="Rhea" id="RHEA:13493"/>
        <dbReference type="ChEBI" id="CHEBI:15378"/>
        <dbReference type="ChEBI" id="CHEBI:49256"/>
        <dbReference type="ChEBI" id="CHEBI:49258"/>
        <dbReference type="ChEBI" id="CHEBI:57783"/>
        <dbReference type="ChEBI" id="CHEBI:58349"/>
        <dbReference type="EC" id="1.1.1.86"/>
    </reaction>
</comment>
<comment type="cofactor">
    <cofactor evidence="1">
        <name>Mg(2+)</name>
        <dbReference type="ChEBI" id="CHEBI:18420"/>
    </cofactor>
    <text evidence="1">Binds 2 magnesium ions per subunit.</text>
</comment>
<comment type="pathway">
    <text evidence="1">Amino-acid biosynthesis; L-isoleucine biosynthesis; L-isoleucine from 2-oxobutanoate: step 2/4.</text>
</comment>
<comment type="pathway">
    <text evidence="1">Amino-acid biosynthesis; L-valine biosynthesis; L-valine from pyruvate: step 2/4.</text>
</comment>
<comment type="similarity">
    <text evidence="1">Belongs to the ketol-acid reductoisomerase family.</text>
</comment>
<dbReference type="EC" id="1.1.1.86" evidence="1"/>
<dbReference type="EMBL" id="CP000250">
    <property type="protein sequence ID" value="ABD08037.1"/>
    <property type="molecule type" value="Genomic_DNA"/>
</dbReference>
<dbReference type="RefSeq" id="WP_011442221.1">
    <property type="nucleotide sequence ID" value="NC_007778.1"/>
</dbReference>
<dbReference type="SMR" id="Q2IUS3"/>
<dbReference type="STRING" id="316058.RPB_3341"/>
<dbReference type="KEGG" id="rpb:RPB_3341"/>
<dbReference type="eggNOG" id="COG0059">
    <property type="taxonomic scope" value="Bacteria"/>
</dbReference>
<dbReference type="HOGENOM" id="CLU_033821_0_1_5"/>
<dbReference type="OrthoDB" id="9804088at2"/>
<dbReference type="UniPathway" id="UPA00047">
    <property type="reaction ID" value="UER00056"/>
</dbReference>
<dbReference type="UniPathway" id="UPA00049">
    <property type="reaction ID" value="UER00060"/>
</dbReference>
<dbReference type="Proteomes" id="UP000008809">
    <property type="component" value="Chromosome"/>
</dbReference>
<dbReference type="GO" id="GO:0005829">
    <property type="term" value="C:cytosol"/>
    <property type="evidence" value="ECO:0007669"/>
    <property type="project" value="TreeGrafter"/>
</dbReference>
<dbReference type="GO" id="GO:0004455">
    <property type="term" value="F:ketol-acid reductoisomerase activity"/>
    <property type="evidence" value="ECO:0007669"/>
    <property type="project" value="UniProtKB-UniRule"/>
</dbReference>
<dbReference type="GO" id="GO:0000287">
    <property type="term" value="F:magnesium ion binding"/>
    <property type="evidence" value="ECO:0007669"/>
    <property type="project" value="UniProtKB-UniRule"/>
</dbReference>
<dbReference type="GO" id="GO:0050661">
    <property type="term" value="F:NADP binding"/>
    <property type="evidence" value="ECO:0007669"/>
    <property type="project" value="InterPro"/>
</dbReference>
<dbReference type="GO" id="GO:0009097">
    <property type="term" value="P:isoleucine biosynthetic process"/>
    <property type="evidence" value="ECO:0007669"/>
    <property type="project" value="UniProtKB-UniRule"/>
</dbReference>
<dbReference type="GO" id="GO:0009099">
    <property type="term" value="P:L-valine biosynthetic process"/>
    <property type="evidence" value="ECO:0007669"/>
    <property type="project" value="UniProtKB-UniRule"/>
</dbReference>
<dbReference type="FunFam" id="3.40.50.720:FF:000023">
    <property type="entry name" value="Ketol-acid reductoisomerase (NADP(+))"/>
    <property type="match status" value="1"/>
</dbReference>
<dbReference type="Gene3D" id="6.10.240.10">
    <property type="match status" value="1"/>
</dbReference>
<dbReference type="Gene3D" id="3.40.50.720">
    <property type="entry name" value="NAD(P)-binding Rossmann-like Domain"/>
    <property type="match status" value="1"/>
</dbReference>
<dbReference type="HAMAP" id="MF_00435">
    <property type="entry name" value="IlvC"/>
    <property type="match status" value="1"/>
</dbReference>
<dbReference type="InterPro" id="IPR008927">
    <property type="entry name" value="6-PGluconate_DH-like_C_sf"/>
</dbReference>
<dbReference type="InterPro" id="IPR013023">
    <property type="entry name" value="KARI"/>
</dbReference>
<dbReference type="InterPro" id="IPR000506">
    <property type="entry name" value="KARI_C"/>
</dbReference>
<dbReference type="InterPro" id="IPR013116">
    <property type="entry name" value="KARI_N"/>
</dbReference>
<dbReference type="InterPro" id="IPR014359">
    <property type="entry name" value="KARI_prok"/>
</dbReference>
<dbReference type="InterPro" id="IPR036291">
    <property type="entry name" value="NAD(P)-bd_dom_sf"/>
</dbReference>
<dbReference type="NCBIfam" id="TIGR00465">
    <property type="entry name" value="ilvC"/>
    <property type="match status" value="1"/>
</dbReference>
<dbReference type="NCBIfam" id="NF004017">
    <property type="entry name" value="PRK05479.1"/>
    <property type="match status" value="1"/>
</dbReference>
<dbReference type="NCBIfam" id="NF009940">
    <property type="entry name" value="PRK13403.1"/>
    <property type="match status" value="1"/>
</dbReference>
<dbReference type="PANTHER" id="PTHR21371">
    <property type="entry name" value="KETOL-ACID REDUCTOISOMERASE, MITOCHONDRIAL"/>
    <property type="match status" value="1"/>
</dbReference>
<dbReference type="PANTHER" id="PTHR21371:SF1">
    <property type="entry name" value="KETOL-ACID REDUCTOISOMERASE, MITOCHONDRIAL"/>
    <property type="match status" value="1"/>
</dbReference>
<dbReference type="Pfam" id="PF01450">
    <property type="entry name" value="KARI_C"/>
    <property type="match status" value="1"/>
</dbReference>
<dbReference type="Pfam" id="PF07991">
    <property type="entry name" value="KARI_N"/>
    <property type="match status" value="1"/>
</dbReference>
<dbReference type="PIRSF" id="PIRSF000116">
    <property type="entry name" value="IlvC_gammaproteo"/>
    <property type="match status" value="1"/>
</dbReference>
<dbReference type="SUPFAM" id="SSF48179">
    <property type="entry name" value="6-phosphogluconate dehydrogenase C-terminal domain-like"/>
    <property type="match status" value="1"/>
</dbReference>
<dbReference type="SUPFAM" id="SSF51735">
    <property type="entry name" value="NAD(P)-binding Rossmann-fold domains"/>
    <property type="match status" value="1"/>
</dbReference>
<dbReference type="PROSITE" id="PS51851">
    <property type="entry name" value="KARI_C"/>
    <property type="match status" value="1"/>
</dbReference>
<dbReference type="PROSITE" id="PS51850">
    <property type="entry name" value="KARI_N"/>
    <property type="match status" value="1"/>
</dbReference>
<organism>
    <name type="scientific">Rhodopseudomonas palustris (strain HaA2)</name>
    <dbReference type="NCBI Taxonomy" id="316058"/>
    <lineage>
        <taxon>Bacteria</taxon>
        <taxon>Pseudomonadati</taxon>
        <taxon>Pseudomonadota</taxon>
        <taxon>Alphaproteobacteria</taxon>
        <taxon>Hyphomicrobiales</taxon>
        <taxon>Nitrobacteraceae</taxon>
        <taxon>Rhodopseudomonas</taxon>
    </lineage>
</organism>
<proteinExistence type="inferred from homology"/>
<protein>
    <recommendedName>
        <fullName evidence="1">Ketol-acid reductoisomerase (NADP(+))</fullName>
        <shortName evidence="1">KARI</shortName>
        <ecNumber evidence="1">1.1.1.86</ecNumber>
    </recommendedName>
    <alternativeName>
        <fullName evidence="1">Acetohydroxy-acid isomeroreductase</fullName>
        <shortName evidence="1">AHIR</shortName>
    </alternativeName>
    <alternativeName>
        <fullName evidence="1">Alpha-keto-beta-hydroxylacyl reductoisomerase</fullName>
    </alternativeName>
    <alternativeName>
        <fullName evidence="1">Ketol-acid reductoisomerase type 1</fullName>
    </alternativeName>
    <alternativeName>
        <fullName evidence="1">Ketol-acid reductoisomerase type I</fullName>
    </alternativeName>
</protein>
<accession>Q2IUS3</accession>
<keyword id="KW-0028">Amino-acid biosynthesis</keyword>
<keyword id="KW-0100">Branched-chain amino acid biosynthesis</keyword>
<keyword id="KW-0460">Magnesium</keyword>
<keyword id="KW-0479">Metal-binding</keyword>
<keyword id="KW-0521">NADP</keyword>
<keyword id="KW-0560">Oxidoreductase</keyword>
<keyword id="KW-1185">Reference proteome</keyword>
<sequence length="339" mass="36976">MRVYYDRDADLNLIKGKKVVIVGYGSQGHAHALNLKDSGVKDVAIALRKGSATAKKAEAAGFKVMEVAEAAKWADVMMMLTPDELQGEIYRDHLHDNMKQGAALLFAHGLNVHFNLIEPRADLDVLMVAPKGPGHTVRSEYQRGGGVPSLIAIHQDPSGNAHDLGLSYASAIGGGRAGIIETSFKEECETDLFGEQVVLCGGLVELIKAGFETLVEAGYAPEMAYFECLHEVKLIVDLIYEGGIANMNYSISNTAEYGEYVTGPRIVTAETKAEMKRVLADIQNGIFTRNWMLENKVNQTSFKATRAKLAAHPIEEVGAKLRDMMPWIKKGALVDKSKN</sequence>
<gene>
    <name evidence="1" type="primary">ilvC</name>
    <name type="ordered locus">RPB_3341</name>
</gene>
<feature type="chain" id="PRO_0000252781" description="Ketol-acid reductoisomerase (NADP(+))">
    <location>
        <begin position="1"/>
        <end position="339"/>
    </location>
</feature>
<feature type="domain" description="KARI N-terminal Rossmann" evidence="2">
    <location>
        <begin position="1"/>
        <end position="182"/>
    </location>
</feature>
<feature type="domain" description="KARI C-terminal knotted" evidence="3">
    <location>
        <begin position="183"/>
        <end position="328"/>
    </location>
</feature>
<feature type="active site" evidence="1">
    <location>
        <position position="108"/>
    </location>
</feature>
<feature type="binding site" evidence="1">
    <location>
        <begin position="24"/>
        <end position="27"/>
    </location>
    <ligand>
        <name>NADP(+)</name>
        <dbReference type="ChEBI" id="CHEBI:58349"/>
    </ligand>
</feature>
<feature type="binding site" evidence="1">
    <location>
        <position position="48"/>
    </location>
    <ligand>
        <name>NADP(+)</name>
        <dbReference type="ChEBI" id="CHEBI:58349"/>
    </ligand>
</feature>
<feature type="binding site" evidence="1">
    <location>
        <position position="51"/>
    </location>
    <ligand>
        <name>NADP(+)</name>
        <dbReference type="ChEBI" id="CHEBI:58349"/>
    </ligand>
</feature>
<feature type="binding site" evidence="1">
    <location>
        <position position="53"/>
    </location>
    <ligand>
        <name>NADP(+)</name>
        <dbReference type="ChEBI" id="CHEBI:58349"/>
    </ligand>
</feature>
<feature type="binding site" evidence="1">
    <location>
        <begin position="83"/>
        <end position="86"/>
    </location>
    <ligand>
        <name>NADP(+)</name>
        <dbReference type="ChEBI" id="CHEBI:58349"/>
    </ligand>
</feature>
<feature type="binding site" evidence="1">
    <location>
        <position position="134"/>
    </location>
    <ligand>
        <name>NADP(+)</name>
        <dbReference type="ChEBI" id="CHEBI:58349"/>
    </ligand>
</feature>
<feature type="binding site" evidence="1">
    <location>
        <position position="191"/>
    </location>
    <ligand>
        <name>Mg(2+)</name>
        <dbReference type="ChEBI" id="CHEBI:18420"/>
        <label>1</label>
    </ligand>
</feature>
<feature type="binding site" evidence="1">
    <location>
        <position position="191"/>
    </location>
    <ligand>
        <name>Mg(2+)</name>
        <dbReference type="ChEBI" id="CHEBI:18420"/>
        <label>2</label>
    </ligand>
</feature>
<feature type="binding site" evidence="1">
    <location>
        <position position="195"/>
    </location>
    <ligand>
        <name>Mg(2+)</name>
        <dbReference type="ChEBI" id="CHEBI:18420"/>
        <label>1</label>
    </ligand>
</feature>
<feature type="binding site" evidence="1">
    <location>
        <position position="227"/>
    </location>
    <ligand>
        <name>Mg(2+)</name>
        <dbReference type="ChEBI" id="CHEBI:18420"/>
        <label>2</label>
    </ligand>
</feature>
<feature type="binding site" evidence="1">
    <location>
        <position position="231"/>
    </location>
    <ligand>
        <name>Mg(2+)</name>
        <dbReference type="ChEBI" id="CHEBI:18420"/>
        <label>2</label>
    </ligand>
</feature>
<feature type="binding site" evidence="1">
    <location>
        <position position="252"/>
    </location>
    <ligand>
        <name>substrate</name>
    </ligand>
</feature>
<reference key="1">
    <citation type="submission" date="2006-01" db="EMBL/GenBank/DDBJ databases">
        <title>Complete sequence of Rhodopseudomonas palustris HaA2.</title>
        <authorList>
            <consortium name="US DOE Joint Genome Institute"/>
            <person name="Copeland A."/>
            <person name="Lucas S."/>
            <person name="Lapidus A."/>
            <person name="Barry K."/>
            <person name="Detter J.C."/>
            <person name="Glavina T."/>
            <person name="Hammon N."/>
            <person name="Israni S."/>
            <person name="Pitluck S."/>
            <person name="Chain P."/>
            <person name="Malfatti S."/>
            <person name="Shin M."/>
            <person name="Vergez L."/>
            <person name="Schmutz J."/>
            <person name="Larimer F."/>
            <person name="Land M."/>
            <person name="Hauser L."/>
            <person name="Pelletier D.A."/>
            <person name="Kyrpides N."/>
            <person name="Anderson I."/>
            <person name="Oda Y."/>
            <person name="Harwood C.S."/>
            <person name="Richardson P."/>
        </authorList>
    </citation>
    <scope>NUCLEOTIDE SEQUENCE [LARGE SCALE GENOMIC DNA]</scope>
    <source>
        <strain>HaA2</strain>
    </source>
</reference>
<name>ILVC_RHOP2</name>